<sequence length="967" mass="109407">MDVASECNIKVICRVRPLNEAEERAGSKFILKFPTDDSISIAGKVFVFDKVLKPNVSQEYVYNVGAKPIVADVLSGCNGTIFAYGQTSSGKTHTMEGVLDKPSMHGIIPRIVQDIFNYIYGMDENLEFHIKISYYEIYLDKIRDLLDVTKTNLAVHEDKNRVPFVKGATERFVSSPEEVMEVIDEGKNNRHVAVTNMNEHSSRSHSVFLINVKQENVETQKKLSGKLYLVDLAGSEKVSKTGAEGAVLDEAKNINKSLSALGNVISALADGNKSHVPYRDSKLTRILQESLGGNARTTMVICCSPASYNESETKSTLLFGQRAKTIKNVVSVNEELTADEWKRRYEKEKERVTKLKATMAKLEAELQRWRTGQAVSVEEQVDLKEDVPAESPATSTTSLAGGLIASMNEGDRTQLEEERLKLYQQLDDKDDEINNQSQLIEKLKEQMMEQEDLIAQSRRDYENLQQDMSRIQADNESAKDEVKEVLQALEELAMNYDQKSQEVEDKNKENENLSEELNQKLSTLNSLQNELDQLKDSSMHHRKRVTDMMINLLKDLGDIGTIVGGNAAETKPTAGSGEKIEEEFTVARLYISKMKSEVKTLVSRNNQLENTQQDNFKKIETHEKDLSNCKLLIQQHEAKMASLQEAIKDSENKKRMLEDNVDSLNEEYAKLKAQEQMHLAALSEREKETSQASETREVLEKQMEMHREQHQKQLQSLRDEISEKQATVDNLKDDNQRLSLALEKLQADYDKLKQEEVEKAAKLADLSLQIDRREQAKQDLKGLEETVAKELQTLHNLRKLFVQDLQNKVKKSCSKTEEEDEDTGGNAAQKQKISFLENNLEQLTKVHKQLVRDNADLRCELPKLEKRLRATMERVKSLESALKDAKEGAMRDRKRYQHEVDRIKEAVRQKNLARRGHAAQIAKPIRPGQHQSVSPAQAAAIRGGGGLSQNGPMITSTPIRMAPESKA</sequence>
<name>KINH_DORPE</name>
<accession>P21613</accession>
<comment type="function">
    <text>Kinesin is a microtubule-associated force-producing protein that may play a role in organelle transport.</text>
</comment>
<comment type="subunit">
    <text evidence="3">Oligomer composed of two heavy chains and two light chains. Interacts with amyloid-beta precursor-like protein (via cytoplasmic domain) (PubMed:23011729).</text>
</comment>
<comment type="subcellular location">
    <subcellularLocation>
        <location evidence="4">Cytoplasm</location>
        <location evidence="4">Cytoskeleton</location>
    </subcellularLocation>
    <subcellularLocation>
        <location evidence="3">Cell projection</location>
        <location evidence="3">Axon</location>
    </subcellularLocation>
</comment>
<comment type="domain">
    <text>Composed of three structural domains: a large globular N-terminal domain which is responsible for the motor activity of kinesin (it hydrolyzes ATP and binds microtubule), a central alpha-helical coiled coil domain that mediates the heavy chain dimerization; and a small globular C-terminal domain which interacts with other proteins (such as the kinesin light chains), vesicles and membranous organelles.</text>
</comment>
<comment type="similarity">
    <text evidence="1">Belongs to the TRAFAC class myosin-kinesin ATPase superfamily. Kinesin family. Kinesin subfamily.</text>
</comment>
<organism>
    <name type="scientific">Doryteuthis pealeii</name>
    <name type="common">Longfin inshore squid</name>
    <name type="synonym">Loligo pealeii</name>
    <dbReference type="NCBI Taxonomy" id="1051067"/>
    <lineage>
        <taxon>Eukaryota</taxon>
        <taxon>Metazoa</taxon>
        <taxon>Spiralia</taxon>
        <taxon>Lophotrochozoa</taxon>
        <taxon>Mollusca</taxon>
        <taxon>Cephalopoda</taxon>
        <taxon>Coleoidea</taxon>
        <taxon>Decapodiformes</taxon>
        <taxon>Myopsida</taxon>
        <taxon>Loliginidae</taxon>
        <taxon>Doryteuthis</taxon>
    </lineage>
</organism>
<keyword id="KW-0067">ATP-binding</keyword>
<keyword id="KW-0966">Cell projection</keyword>
<keyword id="KW-0175">Coiled coil</keyword>
<keyword id="KW-0963">Cytoplasm</keyword>
<keyword id="KW-0206">Cytoskeleton</keyword>
<keyword id="KW-0493">Microtubule</keyword>
<keyword id="KW-0505">Motor protein</keyword>
<keyword id="KW-0547">Nucleotide-binding</keyword>
<dbReference type="EMBL" id="J05258">
    <property type="protein sequence ID" value="AAA29990.1"/>
    <property type="molecule type" value="mRNA"/>
</dbReference>
<dbReference type="PIR" id="A35075">
    <property type="entry name" value="A35075"/>
</dbReference>
<dbReference type="SMR" id="P21613"/>
<dbReference type="GO" id="GO:0030424">
    <property type="term" value="C:axon"/>
    <property type="evidence" value="ECO:0007669"/>
    <property type="project" value="UniProtKB-SubCell"/>
</dbReference>
<dbReference type="GO" id="GO:0005737">
    <property type="term" value="C:cytoplasm"/>
    <property type="evidence" value="ECO:0007669"/>
    <property type="project" value="UniProtKB-KW"/>
</dbReference>
<dbReference type="GO" id="GO:0005874">
    <property type="term" value="C:microtubule"/>
    <property type="evidence" value="ECO:0007669"/>
    <property type="project" value="UniProtKB-KW"/>
</dbReference>
<dbReference type="GO" id="GO:0005524">
    <property type="term" value="F:ATP binding"/>
    <property type="evidence" value="ECO:0007669"/>
    <property type="project" value="UniProtKB-KW"/>
</dbReference>
<dbReference type="GO" id="GO:0008017">
    <property type="term" value="F:microtubule binding"/>
    <property type="evidence" value="ECO:0007669"/>
    <property type="project" value="InterPro"/>
</dbReference>
<dbReference type="GO" id="GO:0003777">
    <property type="term" value="F:microtubule motor activity"/>
    <property type="evidence" value="ECO:0007669"/>
    <property type="project" value="InterPro"/>
</dbReference>
<dbReference type="GO" id="GO:0007018">
    <property type="term" value="P:microtubule-based movement"/>
    <property type="evidence" value="ECO:0007669"/>
    <property type="project" value="InterPro"/>
</dbReference>
<dbReference type="CDD" id="cd23649">
    <property type="entry name" value="Khc_CBD_cc"/>
    <property type="match status" value="1"/>
</dbReference>
<dbReference type="CDD" id="cd01369">
    <property type="entry name" value="KISc_KHC_KIF5"/>
    <property type="match status" value="1"/>
</dbReference>
<dbReference type="FunFam" id="3.40.850.10:FF:000067">
    <property type="entry name" value="Kinesin-like protein"/>
    <property type="match status" value="1"/>
</dbReference>
<dbReference type="Gene3D" id="1.10.287.1490">
    <property type="match status" value="1"/>
</dbReference>
<dbReference type="Gene3D" id="6.10.250.1590">
    <property type="match status" value="1"/>
</dbReference>
<dbReference type="Gene3D" id="3.40.850.10">
    <property type="entry name" value="Kinesin motor domain"/>
    <property type="match status" value="1"/>
</dbReference>
<dbReference type="InterPro" id="IPR027640">
    <property type="entry name" value="Kinesin-like_fam"/>
</dbReference>
<dbReference type="InterPro" id="IPR019821">
    <property type="entry name" value="Kinesin_motor_CS"/>
</dbReference>
<dbReference type="InterPro" id="IPR001752">
    <property type="entry name" value="Kinesin_motor_dom"/>
</dbReference>
<dbReference type="InterPro" id="IPR036961">
    <property type="entry name" value="Kinesin_motor_dom_sf"/>
</dbReference>
<dbReference type="InterPro" id="IPR027417">
    <property type="entry name" value="P-loop_NTPase"/>
</dbReference>
<dbReference type="PANTHER" id="PTHR47968">
    <property type="entry name" value="CENTROMERE PROTEIN E"/>
    <property type="match status" value="1"/>
</dbReference>
<dbReference type="PANTHER" id="PTHR47968:SF36">
    <property type="entry name" value="KINESIN HEAVY CHAIN ISOFORM X1"/>
    <property type="match status" value="1"/>
</dbReference>
<dbReference type="Pfam" id="PF00225">
    <property type="entry name" value="Kinesin"/>
    <property type="match status" value="1"/>
</dbReference>
<dbReference type="PRINTS" id="PR00380">
    <property type="entry name" value="KINESINHEAVY"/>
</dbReference>
<dbReference type="SMART" id="SM00129">
    <property type="entry name" value="KISc"/>
    <property type="match status" value="1"/>
</dbReference>
<dbReference type="SUPFAM" id="SSF52540">
    <property type="entry name" value="P-loop containing nucleoside triphosphate hydrolases"/>
    <property type="match status" value="1"/>
</dbReference>
<dbReference type="PROSITE" id="PS00411">
    <property type="entry name" value="KINESIN_MOTOR_1"/>
    <property type="match status" value="1"/>
</dbReference>
<dbReference type="PROSITE" id="PS50067">
    <property type="entry name" value="KINESIN_MOTOR_2"/>
    <property type="match status" value="1"/>
</dbReference>
<feature type="chain" id="PRO_0000125358" description="Kinesin heavy chain">
    <location>
        <begin position="1"/>
        <end position="967"/>
    </location>
</feature>
<feature type="domain" description="Kinesin motor" evidence="1">
    <location>
        <begin position="8"/>
        <end position="326"/>
    </location>
</feature>
<feature type="region of interest" description="Microtubule-binding">
    <location>
        <begin position="173"/>
        <end position="314"/>
    </location>
</feature>
<feature type="region of interest" description="Disordered" evidence="2">
    <location>
        <begin position="387"/>
        <end position="411"/>
    </location>
</feature>
<feature type="region of interest" description="Globular">
    <location>
        <begin position="862"/>
        <end position="967"/>
    </location>
</feature>
<feature type="region of interest" description="Disordered" evidence="2">
    <location>
        <begin position="923"/>
        <end position="967"/>
    </location>
</feature>
<feature type="coiled-coil region">
    <location>
        <begin position="392"/>
        <end position="861"/>
    </location>
</feature>
<feature type="compositionally biased region" description="Polar residues" evidence="2">
    <location>
        <begin position="949"/>
        <end position="958"/>
    </location>
</feature>
<feature type="binding site" evidence="1">
    <location>
        <begin position="85"/>
        <end position="92"/>
    </location>
    <ligand>
        <name>ATP</name>
        <dbReference type="ChEBI" id="CHEBI:30616"/>
    </ligand>
</feature>
<protein>
    <recommendedName>
        <fullName>Kinesin heavy chain</fullName>
    </recommendedName>
</protein>
<reference key="1">
    <citation type="journal article" date="1990" name="J. Biol. Chem.">
        <title>The primary structure and analysis of the squid kinesin heavy chain.</title>
        <authorList>
            <person name="Kosik K.S."/>
            <person name="Orecchio L.D."/>
            <person name="Schnapp B."/>
            <person name="Inouye H."/>
            <person name="Neve R.L."/>
        </authorList>
    </citation>
    <scope>NUCLEOTIDE SEQUENCE [MRNA]</scope>
</reference>
<reference key="2">
    <citation type="journal article" date="2012" name="Phys. Biol.">
        <title>Quantitative measurements and modeling of cargo-motor interactions during fast transport in the living axon.</title>
        <authorList>
            <person name="Seamster P.E."/>
            <person name="Loewenberg M."/>
            <person name="Pascal J."/>
            <person name="Chauviere A."/>
            <person name="Gonzales A."/>
            <person name="Cristini V."/>
            <person name="Bearer E.L."/>
        </authorList>
    </citation>
    <scope>INTERACTION WITH AMYLOID-BETA PRECURSOR-LIKE PROTEIN</scope>
    <scope>SUBCELLULAR LOCATION</scope>
</reference>
<proteinExistence type="evidence at protein level"/>
<evidence type="ECO:0000255" key="1">
    <source>
        <dbReference type="PROSITE-ProRule" id="PRU00283"/>
    </source>
</evidence>
<evidence type="ECO:0000256" key="2">
    <source>
        <dbReference type="SAM" id="MobiDB-lite"/>
    </source>
</evidence>
<evidence type="ECO:0000269" key="3">
    <source>
    </source>
</evidence>
<evidence type="ECO:0000305" key="4"/>